<dbReference type="EC" id="4.1.3.3" evidence="1"/>
<dbReference type="EMBL" id="CP000569">
    <property type="protein sequence ID" value="ABN74838.1"/>
    <property type="molecule type" value="Genomic_DNA"/>
</dbReference>
<dbReference type="RefSeq" id="WP_005599265.1">
    <property type="nucleotide sequence ID" value="NC_009053.1"/>
</dbReference>
<dbReference type="SMR" id="A3N352"/>
<dbReference type="STRING" id="416269.APL_1754"/>
<dbReference type="EnsemblBacteria" id="ABN74838">
    <property type="protein sequence ID" value="ABN74838"/>
    <property type="gene ID" value="APL_1754"/>
</dbReference>
<dbReference type="GeneID" id="48600046"/>
<dbReference type="KEGG" id="apl:APL_1754"/>
<dbReference type="eggNOG" id="COG0329">
    <property type="taxonomic scope" value="Bacteria"/>
</dbReference>
<dbReference type="HOGENOM" id="CLU_049343_6_0_6"/>
<dbReference type="UniPathway" id="UPA00629">
    <property type="reaction ID" value="UER00680"/>
</dbReference>
<dbReference type="Proteomes" id="UP000001432">
    <property type="component" value="Chromosome"/>
</dbReference>
<dbReference type="GO" id="GO:0005829">
    <property type="term" value="C:cytosol"/>
    <property type="evidence" value="ECO:0007669"/>
    <property type="project" value="TreeGrafter"/>
</dbReference>
<dbReference type="GO" id="GO:0008747">
    <property type="term" value="F:N-acetylneuraminate lyase activity"/>
    <property type="evidence" value="ECO:0007669"/>
    <property type="project" value="UniProtKB-UniRule"/>
</dbReference>
<dbReference type="GO" id="GO:0005975">
    <property type="term" value="P:carbohydrate metabolic process"/>
    <property type="evidence" value="ECO:0007669"/>
    <property type="project" value="UniProtKB-UniRule"/>
</dbReference>
<dbReference type="GO" id="GO:0019262">
    <property type="term" value="P:N-acetylneuraminate catabolic process"/>
    <property type="evidence" value="ECO:0007669"/>
    <property type="project" value="UniProtKB-UniRule"/>
</dbReference>
<dbReference type="CDD" id="cd00954">
    <property type="entry name" value="NAL"/>
    <property type="match status" value="1"/>
</dbReference>
<dbReference type="FunFam" id="3.20.20.70:FF:000039">
    <property type="entry name" value="N-acetylneuraminate lyase"/>
    <property type="match status" value="1"/>
</dbReference>
<dbReference type="Gene3D" id="3.20.20.70">
    <property type="entry name" value="Aldolase class I"/>
    <property type="match status" value="1"/>
</dbReference>
<dbReference type="HAMAP" id="MF_01237">
    <property type="entry name" value="N_acetylneuram_lyase"/>
    <property type="match status" value="1"/>
</dbReference>
<dbReference type="InterPro" id="IPR013785">
    <property type="entry name" value="Aldolase_TIM"/>
</dbReference>
<dbReference type="InterPro" id="IPR002220">
    <property type="entry name" value="DapA-like"/>
</dbReference>
<dbReference type="InterPro" id="IPR005264">
    <property type="entry name" value="NanA"/>
</dbReference>
<dbReference type="InterPro" id="IPR020625">
    <property type="entry name" value="Schiff_base-form_aldolases_AS"/>
</dbReference>
<dbReference type="InterPro" id="IPR020624">
    <property type="entry name" value="Schiff_base-form_aldolases_CS"/>
</dbReference>
<dbReference type="NCBIfam" id="TIGR00683">
    <property type="entry name" value="nanA"/>
    <property type="match status" value="1"/>
</dbReference>
<dbReference type="NCBIfam" id="NF003164">
    <property type="entry name" value="PRK04147.1"/>
    <property type="match status" value="1"/>
</dbReference>
<dbReference type="PANTHER" id="PTHR42849">
    <property type="entry name" value="N-ACETYLNEURAMINATE LYASE"/>
    <property type="match status" value="1"/>
</dbReference>
<dbReference type="PANTHER" id="PTHR42849:SF1">
    <property type="entry name" value="N-ACETYLNEURAMINATE LYASE"/>
    <property type="match status" value="1"/>
</dbReference>
<dbReference type="Pfam" id="PF00701">
    <property type="entry name" value="DHDPS"/>
    <property type="match status" value="1"/>
</dbReference>
<dbReference type="PIRSF" id="PIRSF001365">
    <property type="entry name" value="DHDPS"/>
    <property type="match status" value="1"/>
</dbReference>
<dbReference type="PRINTS" id="PR00146">
    <property type="entry name" value="DHPICSNTHASE"/>
</dbReference>
<dbReference type="SMART" id="SM01130">
    <property type="entry name" value="DHDPS"/>
    <property type="match status" value="1"/>
</dbReference>
<dbReference type="SUPFAM" id="SSF51569">
    <property type="entry name" value="Aldolase"/>
    <property type="match status" value="1"/>
</dbReference>
<dbReference type="PROSITE" id="PS00665">
    <property type="entry name" value="DHDPS_1"/>
    <property type="match status" value="1"/>
</dbReference>
<dbReference type="PROSITE" id="PS00666">
    <property type="entry name" value="DHDPS_2"/>
    <property type="match status" value="1"/>
</dbReference>
<accession>A3N352</accession>
<feature type="chain" id="PRO_1000066919" description="N-acetylneuraminate lyase">
    <location>
        <begin position="1"/>
        <end position="292"/>
    </location>
</feature>
<feature type="active site" description="Proton donor" evidence="1">
    <location>
        <position position="136"/>
    </location>
</feature>
<feature type="active site" description="Schiff-base intermediate with substrate" evidence="1">
    <location>
        <position position="164"/>
    </location>
</feature>
<feature type="binding site" evidence="1">
    <location>
        <position position="47"/>
    </location>
    <ligand>
        <name>aceneuramate</name>
        <dbReference type="ChEBI" id="CHEBI:173083"/>
    </ligand>
</feature>
<feature type="binding site" evidence="1">
    <location>
        <position position="48"/>
    </location>
    <ligand>
        <name>aceneuramate</name>
        <dbReference type="ChEBI" id="CHEBI:173083"/>
    </ligand>
</feature>
<feature type="binding site" evidence="1">
    <location>
        <position position="166"/>
    </location>
    <ligand>
        <name>aceneuramate</name>
        <dbReference type="ChEBI" id="CHEBI:173083"/>
    </ligand>
</feature>
<feature type="binding site" evidence="1">
    <location>
        <position position="188"/>
    </location>
    <ligand>
        <name>aceneuramate</name>
        <dbReference type="ChEBI" id="CHEBI:173083"/>
    </ligand>
</feature>
<feature type="binding site" evidence="1">
    <location>
        <position position="190"/>
    </location>
    <ligand>
        <name>aceneuramate</name>
        <dbReference type="ChEBI" id="CHEBI:173083"/>
    </ligand>
</feature>
<feature type="binding site" evidence="1">
    <location>
        <position position="191"/>
    </location>
    <ligand>
        <name>aceneuramate</name>
        <dbReference type="ChEBI" id="CHEBI:173083"/>
    </ligand>
</feature>
<feature type="binding site" evidence="1">
    <location>
        <position position="207"/>
    </location>
    <ligand>
        <name>aceneuramate</name>
        <dbReference type="ChEBI" id="CHEBI:173083"/>
    </ligand>
</feature>
<name>NANA_ACTP2</name>
<proteinExistence type="inferred from homology"/>
<gene>
    <name evidence="1" type="primary">nanA</name>
    <name type="ordered locus">APL_1754</name>
</gene>
<organism>
    <name type="scientific">Actinobacillus pleuropneumoniae serotype 5b (strain L20)</name>
    <dbReference type="NCBI Taxonomy" id="416269"/>
    <lineage>
        <taxon>Bacteria</taxon>
        <taxon>Pseudomonadati</taxon>
        <taxon>Pseudomonadota</taxon>
        <taxon>Gammaproteobacteria</taxon>
        <taxon>Pasteurellales</taxon>
        <taxon>Pasteurellaceae</taxon>
        <taxon>Actinobacillus</taxon>
    </lineage>
</organism>
<keyword id="KW-0119">Carbohydrate metabolism</keyword>
<keyword id="KW-0963">Cytoplasm</keyword>
<keyword id="KW-0456">Lyase</keyword>
<keyword id="KW-1185">Reference proteome</keyword>
<keyword id="KW-0704">Schiff base</keyword>
<protein>
    <recommendedName>
        <fullName evidence="1">N-acetylneuraminate lyase</fullName>
        <shortName evidence="1">NAL</shortName>
        <shortName evidence="1">Neu5Ac lyase</shortName>
        <ecNumber evidence="1">4.1.3.3</ecNumber>
    </recommendedName>
    <alternativeName>
        <fullName evidence="1">N-acetylneuraminate pyruvate-lyase</fullName>
    </alternativeName>
    <alternativeName>
        <fullName evidence="1">N-acetylneuraminic acid aldolase</fullName>
    </alternativeName>
    <alternativeName>
        <fullName evidence="1">Sialate lyase</fullName>
    </alternativeName>
    <alternativeName>
        <fullName evidence="1">Sialic acid aldolase</fullName>
    </alternativeName>
    <alternativeName>
        <fullName evidence="1">Sialic acid lyase</fullName>
    </alternativeName>
</protein>
<evidence type="ECO:0000255" key="1">
    <source>
        <dbReference type="HAMAP-Rule" id="MF_01237"/>
    </source>
</evidence>
<comment type="function">
    <text evidence="1">Catalyzes the reversible aldol cleavage of N-acetylneuraminic acid (sialic acid; Neu5Ac) to form pyruvate and N-acetylmannosamine (ManNAc) via a Schiff base intermediate.</text>
</comment>
<comment type="catalytic activity">
    <reaction evidence="1">
        <text>aceneuramate = aldehydo-N-acetyl-D-mannosamine + pyruvate</text>
        <dbReference type="Rhea" id="RHEA:23296"/>
        <dbReference type="ChEBI" id="CHEBI:15361"/>
        <dbReference type="ChEBI" id="CHEBI:17122"/>
        <dbReference type="ChEBI" id="CHEBI:173083"/>
        <dbReference type="EC" id="4.1.3.3"/>
    </reaction>
</comment>
<comment type="pathway">
    <text evidence="1">Amino-sugar metabolism; N-acetylneuraminate degradation; D-fructose 6-phosphate from N-acetylneuraminate: step 1/5.</text>
</comment>
<comment type="subunit">
    <text evidence="1">Homotetramer.</text>
</comment>
<comment type="subcellular location">
    <subcellularLocation>
        <location evidence="1">Cytoplasm</location>
    </subcellularLocation>
</comment>
<comment type="similarity">
    <text evidence="1">Belongs to the DapA family. NanA subfamily.</text>
</comment>
<reference key="1">
    <citation type="journal article" date="2008" name="J. Bacteriol.">
        <title>The complete genome sequence of Actinobacillus pleuropneumoniae L20 (serotype 5b).</title>
        <authorList>
            <person name="Foote S.J."/>
            <person name="Bosse J.T."/>
            <person name="Bouevitch A.B."/>
            <person name="Langford P.R."/>
            <person name="Young N.M."/>
            <person name="Nash J.H.E."/>
        </authorList>
    </citation>
    <scope>NUCLEOTIDE SEQUENCE [LARGE SCALE GENOMIC DNA]</scope>
    <source>
        <strain>L20</strain>
    </source>
</reference>
<sequence length="292" mass="32300">MKNLTGIFSALLVAFNEDGSINEQGLRQIIRHNIDKMKVDGLYVGGSTGENFMLSTAEKKEIFRIAKDEAKDQIALIAQVGSVNLQEAVELGKYATELGYDCLSAVTPFYYKFSFAEIKHYYDTIIAETGNNMIVYSIPFLTGVNIGVEQFGELYKNPKILGVKFTAGDFYLLERLKKAYPNHLIWAGFDEMMLPAVALGVDGAIGSTFNVNAPRARQIFELTKQGKLAEALAVQHVTNDLIEGILANGLYLTIKELLKLQGVEAGYCREPMTAKATDKQLEVAKALYAKFL</sequence>